<accession>Q76MV0</accession>
<reference key="1">
    <citation type="submission" date="1999-09" db="EMBL/GenBank/DDBJ databases">
        <title>Cloning of cDNAs associated with embryogenic dedifferentiation of immature pollen grains in Nicotiana tabacum.</title>
        <authorList>
            <person name="Kyo M."/>
        </authorList>
    </citation>
    <scope>NUCLEOTIDE SEQUENCE [MRNA]</scope>
    <source>
        <strain>cv. Samsun</strain>
    </source>
</reference>
<reference key="2">
    <citation type="journal article" date="2005" name="Plant J.">
        <title>Histone deacetylation is required for progression through mitosis in tobacco cells.</title>
        <authorList>
            <person name="Li Y."/>
            <person name="Butenko Y."/>
            <person name="Grafi G."/>
        </authorList>
    </citation>
    <scope>METHYLATION AT LYS-5 AND LYS-10</scope>
    <scope>ACETYLATION</scope>
    <scope>PHOSPHORYLATION AT SER-11</scope>
</reference>
<reference key="3">
    <citation type="journal article" date="2006" name="Plant J.">
        <title>Aurora kinase is required for chromosome segregation in tobacco BY-2 cells.</title>
        <authorList>
            <person name="Kurihara D."/>
            <person name="Matsunaga S."/>
            <person name="Kawabe A."/>
            <person name="Fujimoto S."/>
            <person name="Noda M."/>
            <person name="Uchiyama S."/>
            <person name="Fukui K."/>
        </authorList>
    </citation>
    <scope>PHOSPHORYLATION AT THR-4; THR-12 AND SER-29</scope>
</reference>
<evidence type="ECO:0000250" key="1"/>
<evidence type="ECO:0000250" key="2">
    <source>
        <dbReference type="UniProtKB" id="P59226"/>
    </source>
</evidence>
<evidence type="ECO:0000256" key="3">
    <source>
        <dbReference type="SAM" id="MobiDB-lite"/>
    </source>
</evidence>
<evidence type="ECO:0000269" key="4">
    <source>
    </source>
</evidence>
<evidence type="ECO:0000269" key="5">
    <source>
    </source>
</evidence>
<evidence type="ECO:0000305" key="6"/>
<gene>
    <name type="primary">B34</name>
</gene>
<proteinExistence type="evidence at protein level"/>
<keyword id="KW-0007">Acetylation</keyword>
<keyword id="KW-0158">Chromosome</keyword>
<keyword id="KW-0238">DNA-binding</keyword>
<keyword id="KW-0488">Methylation</keyword>
<keyword id="KW-0544">Nucleosome core</keyword>
<keyword id="KW-0539">Nucleus</keyword>
<keyword id="KW-0597">Phosphoprotein</keyword>
<keyword id="KW-1185">Reference proteome</keyword>
<dbReference type="EMBL" id="AB032544">
    <property type="protein sequence ID" value="BAC53942.1"/>
    <property type="molecule type" value="mRNA"/>
</dbReference>
<dbReference type="RefSeq" id="XP_016438522.1">
    <property type="nucleotide sequence ID" value="XM_016583036.1"/>
</dbReference>
<dbReference type="SMR" id="Q76MV0"/>
<dbReference type="STRING" id="4097.Q76MV0"/>
<dbReference type="iPTMnet" id="Q76MV0"/>
<dbReference type="PaxDb" id="4097-Q76MV0"/>
<dbReference type="KEGG" id="nta:107759185"/>
<dbReference type="KEGG" id="nta:107759464"/>
<dbReference type="KEGG" id="nta:107763111"/>
<dbReference type="KEGG" id="nta:107764469"/>
<dbReference type="KEGG" id="nta:107769564"/>
<dbReference type="KEGG" id="nta:107794615"/>
<dbReference type="KEGG" id="nta:107798424"/>
<dbReference type="KEGG" id="nta:107816172"/>
<dbReference type="KEGG" id="nta:107816533"/>
<dbReference type="KEGG" id="nta:107816835"/>
<dbReference type="KEGG" id="nta:107816836"/>
<dbReference type="KEGG" id="nta:107818805"/>
<dbReference type="KEGG" id="nta:107820477"/>
<dbReference type="KEGG" id="nta:107824614"/>
<dbReference type="KEGG" id="nta:107831322"/>
<dbReference type="OrthoDB" id="1225755at2759"/>
<dbReference type="PhylomeDB" id="Q76MV0"/>
<dbReference type="Proteomes" id="UP000084051">
    <property type="component" value="Unplaced"/>
</dbReference>
<dbReference type="GO" id="GO:0000786">
    <property type="term" value="C:nucleosome"/>
    <property type="evidence" value="ECO:0007669"/>
    <property type="project" value="UniProtKB-KW"/>
</dbReference>
<dbReference type="GO" id="GO:0005634">
    <property type="term" value="C:nucleus"/>
    <property type="evidence" value="ECO:0000318"/>
    <property type="project" value="GO_Central"/>
</dbReference>
<dbReference type="GO" id="GO:0003677">
    <property type="term" value="F:DNA binding"/>
    <property type="evidence" value="ECO:0007669"/>
    <property type="project" value="UniProtKB-KW"/>
</dbReference>
<dbReference type="GO" id="GO:0046982">
    <property type="term" value="F:protein heterodimerization activity"/>
    <property type="evidence" value="ECO:0007669"/>
    <property type="project" value="InterPro"/>
</dbReference>
<dbReference type="GO" id="GO:0030527">
    <property type="term" value="F:structural constituent of chromatin"/>
    <property type="evidence" value="ECO:0007669"/>
    <property type="project" value="InterPro"/>
</dbReference>
<dbReference type="CDD" id="cd22911">
    <property type="entry name" value="HFD_H3"/>
    <property type="match status" value="1"/>
</dbReference>
<dbReference type="FunFam" id="1.10.20.10:FF:000078">
    <property type="entry name" value="Histone H3"/>
    <property type="match status" value="1"/>
</dbReference>
<dbReference type="FunFam" id="1.10.20.10:FF:000044">
    <property type="entry name" value="Histone H3.3"/>
    <property type="match status" value="1"/>
</dbReference>
<dbReference type="Gene3D" id="1.10.20.10">
    <property type="entry name" value="Histone, subunit A"/>
    <property type="match status" value="1"/>
</dbReference>
<dbReference type="InterPro" id="IPR009072">
    <property type="entry name" value="Histone-fold"/>
</dbReference>
<dbReference type="InterPro" id="IPR007125">
    <property type="entry name" value="Histone_H2A/H2B/H3"/>
</dbReference>
<dbReference type="InterPro" id="IPR000164">
    <property type="entry name" value="Histone_H3/CENP-A"/>
</dbReference>
<dbReference type="PANTHER" id="PTHR11426">
    <property type="entry name" value="HISTONE H3"/>
    <property type="match status" value="1"/>
</dbReference>
<dbReference type="Pfam" id="PF00125">
    <property type="entry name" value="Histone"/>
    <property type="match status" value="1"/>
</dbReference>
<dbReference type="PRINTS" id="PR00622">
    <property type="entry name" value="HISTONEH3"/>
</dbReference>
<dbReference type="SMART" id="SM00428">
    <property type="entry name" value="H3"/>
    <property type="match status" value="1"/>
</dbReference>
<dbReference type="SUPFAM" id="SSF47113">
    <property type="entry name" value="Histone-fold"/>
    <property type="match status" value="1"/>
</dbReference>
<dbReference type="PROSITE" id="PS00322">
    <property type="entry name" value="HISTONE_H3_1"/>
    <property type="match status" value="1"/>
</dbReference>
<dbReference type="PROSITE" id="PS00959">
    <property type="entry name" value="HISTONE_H3_2"/>
    <property type="match status" value="1"/>
</dbReference>
<comment type="function">
    <text>Core component of nucleosome. Nucleosomes wrap and compact DNA into chromatin, limiting DNA accessibility to the cellular machineries which require DNA as a template. Histones thereby play a central role in transcription regulation, DNA repair, DNA replication and chromosomal stability. DNA accessibility is regulated via a complex set of post-translational modifications of histones, also called histone code, and nucleosome remodeling.</text>
</comment>
<comment type="subunit">
    <text>The nucleosome is a histone octamer containing two molecules each of H2A, H2B, H3 and H4 assembled in one H3-H4 heterotetramer and two H2A-H2B heterodimers. The octamer wraps approximately 147 bp of DNA.</text>
</comment>
<comment type="subcellular location">
    <subcellularLocation>
        <location>Nucleus</location>
    </subcellularLocation>
    <subcellularLocation>
        <location>Chromosome</location>
    </subcellularLocation>
</comment>
<comment type="PTM">
    <text evidence="1 4">Acetylation is generally linked to gene activation. Can be acetylated to form H3K9ac, H3K14ac, H3K18ac and H3K23ac. H3K9ac could compete with H3K9me and prevent gene silencing. H3K9ac is restricted to euchromatin (By similarity). H3K9ac and H3K14ac are associated with chromatin during interphase. Deacetylation at the metaphase-anaphase transition and maintained up to telophase.</text>
</comment>
<comment type="PTM">
    <text evidence="1 4">Methylated to form mainly H3K4me, H3K9me, H3K18me, H3K23me, H3K27me and H3K36me. H3K4me1/2/3, H3K9me3, H3K27me3 and H3K36me1/2/3 are typical marks for euchromatin, whereas heterochromatic chromocenters are enriched in H3K9me1/2 and H3K27me1/2. H2BK143ub1 is probably prerequisite for H3K4me (By similarity). H3K4me2 and H3K9me2 remain associated with chromosomes during interphase and mitosis. Methylated in vitro by SET1 to form H3K9me and H3K27me.</text>
</comment>
<comment type="PTM">
    <text evidence="4 5">Phosphorylated to form H3T3ph, H3S10ph, H3T11ph and H3S28ph. H3S10ph and H3S28ph found from prophase to telophase. Restricted to chromocenters from prophase to early anaphase, but widespread along chromosomes at late stages of mitosis, when H3 is deacetylated. No phosphorylation detected during interphase. H3S28ph specifically formed by AUR3 while H3T3ph and H3T11ph are not produced by Aurora.</text>
</comment>
<comment type="similarity">
    <text evidence="6">Belongs to the histone H3 family.</text>
</comment>
<comment type="caution">
    <text evidence="6">To ensure consistency between histone entries, we follow the 'Brno' nomenclature for histone modifications, with positions referring to those used in the literature for the 'closest' model organism. Due to slight variations in histone sequences between organisms and to the presence of initiator methionine in UniProtKB/Swiss-Prot sequences, the actual positions of modified amino acids in the sequence generally differ. In this entry the following conventions are used: H3T3ph = phosphorylated Thr-4; H3K4me1/2/3 = mono-, di- and trimethylated Lys-5; H3K9ac = acetylated Lys-10; H3K9me1/2/3 = mono-, di- and trimethylated Lys-10; H3S10ph = phosphorylated Ser-11; H3T11ph = phosphorylated Thr-12; H3K14ac = acetylated Lys-15; H3K18ac = acetylated Lys-19; H3K18me = methylated Lys-19; H3K23ac = acetylated Lys-24; H3K23me = methylated Lys-24; H3K27me = methylated Lys-28; H3S28ph = phosphorylated Ser-29; H3K36me = methylated Lys-37.</text>
</comment>
<name>H32_TOBAC</name>
<sequence length="136" mass="15268">MARTKQTARKSTGGKAPRKQLATKAARKSAPATGGVKKPHRFRPGTVALREIRKYQKSTELLIRKLPFQRLVREIAQDFKTDLRFQSSAVAALQEAAEAYLVGLFEDTNLCAIHAKRVTIMPKDIQLARRIRGERA</sequence>
<protein>
    <recommendedName>
        <fullName>Histone H3.2</fullName>
    </recommendedName>
</protein>
<organism>
    <name type="scientific">Nicotiana tabacum</name>
    <name type="common">Common tobacco</name>
    <dbReference type="NCBI Taxonomy" id="4097"/>
    <lineage>
        <taxon>Eukaryota</taxon>
        <taxon>Viridiplantae</taxon>
        <taxon>Streptophyta</taxon>
        <taxon>Embryophyta</taxon>
        <taxon>Tracheophyta</taxon>
        <taxon>Spermatophyta</taxon>
        <taxon>Magnoliopsida</taxon>
        <taxon>eudicotyledons</taxon>
        <taxon>Gunneridae</taxon>
        <taxon>Pentapetalae</taxon>
        <taxon>asterids</taxon>
        <taxon>lamiids</taxon>
        <taxon>Solanales</taxon>
        <taxon>Solanaceae</taxon>
        <taxon>Nicotianoideae</taxon>
        <taxon>Nicotianeae</taxon>
        <taxon>Nicotiana</taxon>
    </lineage>
</organism>
<feature type="initiator methionine" description="Removed" evidence="1">
    <location>
        <position position="1"/>
    </location>
</feature>
<feature type="chain" id="PRO_0000280821" description="Histone H3.2">
    <location>
        <begin position="2"/>
        <end position="136"/>
    </location>
</feature>
<feature type="region of interest" description="Disordered" evidence="3">
    <location>
        <begin position="1"/>
        <end position="43"/>
    </location>
</feature>
<feature type="modified residue" description="Phosphothreonine" evidence="5">
    <location>
        <position position="4"/>
    </location>
</feature>
<feature type="modified residue" description="N6,N6,N6-trimethyllysine; alternate" evidence="1">
    <location>
        <position position="5"/>
    </location>
</feature>
<feature type="modified residue" description="N6,N6-dimethyllysine; alternate" evidence="4">
    <location>
        <position position="5"/>
    </location>
</feature>
<feature type="modified residue" description="N6-methyllysine; alternate" evidence="1">
    <location>
        <position position="5"/>
    </location>
</feature>
<feature type="modified residue" description="N6,N6,N6-trimethyllysine; alternate" evidence="1">
    <location>
        <position position="10"/>
    </location>
</feature>
<feature type="modified residue" description="N6,N6-dimethyllysine; alternate" evidence="4">
    <location>
        <position position="10"/>
    </location>
</feature>
<feature type="modified residue" description="N6-acetyllysine; alternate" evidence="2">
    <location>
        <position position="10"/>
    </location>
</feature>
<feature type="modified residue" description="N6-methyllysine; alternate" evidence="1">
    <location>
        <position position="10"/>
    </location>
</feature>
<feature type="modified residue" description="Phosphoserine" evidence="4">
    <location>
        <position position="11"/>
    </location>
</feature>
<feature type="modified residue" description="Phosphothreonine" evidence="5">
    <location>
        <position position="12"/>
    </location>
</feature>
<feature type="modified residue" description="N6-acetyllysine" evidence="2">
    <location>
        <position position="15"/>
    </location>
</feature>
<feature type="modified residue" description="N6-acetyllysine; alternate" evidence="2">
    <location>
        <position position="19"/>
    </location>
</feature>
<feature type="modified residue" description="N6-methylated lysine; alternate" evidence="1">
    <location>
        <position position="19"/>
    </location>
</feature>
<feature type="modified residue" description="N6-acetyllysine; alternate" evidence="2">
    <location>
        <position position="24"/>
    </location>
</feature>
<feature type="modified residue" description="N6-methylated lysine; alternate" evidence="1">
    <location>
        <position position="24"/>
    </location>
</feature>
<feature type="modified residue" description="N6-methylated lysine" evidence="1">
    <location>
        <position position="28"/>
    </location>
</feature>
<feature type="modified residue" description="Phosphoserine" evidence="5">
    <location>
        <position position="29"/>
    </location>
</feature>
<feature type="modified residue" description="N6-methylated lysine" evidence="1">
    <location>
        <position position="37"/>
    </location>
</feature>